<dbReference type="EC" id="5.4.2.2"/>
<dbReference type="EMBL" id="BA000033">
    <property type="protein sequence ID" value="BAB96276.1"/>
    <property type="status" value="ALT_INIT"/>
    <property type="molecule type" value="Genomic_DNA"/>
</dbReference>
<dbReference type="SMR" id="Q8NUV4"/>
<dbReference type="KEGG" id="sam:MW2411"/>
<dbReference type="HOGENOM" id="CLU_016950_0_0_9"/>
<dbReference type="UniPathway" id="UPA00894"/>
<dbReference type="GO" id="GO:0000287">
    <property type="term" value="F:magnesium ion binding"/>
    <property type="evidence" value="ECO:0007669"/>
    <property type="project" value="InterPro"/>
</dbReference>
<dbReference type="GO" id="GO:0004614">
    <property type="term" value="F:phosphoglucomutase activity"/>
    <property type="evidence" value="ECO:0007669"/>
    <property type="project" value="UniProtKB-EC"/>
</dbReference>
<dbReference type="GO" id="GO:0008973">
    <property type="term" value="F:phosphopentomutase activity"/>
    <property type="evidence" value="ECO:0007669"/>
    <property type="project" value="TreeGrafter"/>
</dbReference>
<dbReference type="GO" id="GO:0009246">
    <property type="term" value="P:enterobacterial common antigen biosynthetic process"/>
    <property type="evidence" value="ECO:0007669"/>
    <property type="project" value="UniProtKB-UniPathway"/>
</dbReference>
<dbReference type="GO" id="GO:0006006">
    <property type="term" value="P:glucose metabolic process"/>
    <property type="evidence" value="ECO:0007669"/>
    <property type="project" value="UniProtKB-KW"/>
</dbReference>
<dbReference type="GO" id="GO:0006166">
    <property type="term" value="P:purine ribonucleoside salvage"/>
    <property type="evidence" value="ECO:0007669"/>
    <property type="project" value="TreeGrafter"/>
</dbReference>
<dbReference type="CDD" id="cd05799">
    <property type="entry name" value="PGM2"/>
    <property type="match status" value="1"/>
</dbReference>
<dbReference type="Gene3D" id="3.40.120.10">
    <property type="entry name" value="Alpha-D-Glucose-1,6-Bisphosphate, subunit A, domain 3"/>
    <property type="match status" value="3"/>
</dbReference>
<dbReference type="Gene3D" id="3.30.310.50">
    <property type="entry name" value="Alpha-D-phosphohexomutase, C-terminal domain"/>
    <property type="match status" value="1"/>
</dbReference>
<dbReference type="InterPro" id="IPR005844">
    <property type="entry name" value="A-D-PHexomutase_a/b/a-I"/>
</dbReference>
<dbReference type="InterPro" id="IPR016055">
    <property type="entry name" value="A-D-PHexomutase_a/b/a-I/II/III"/>
</dbReference>
<dbReference type="InterPro" id="IPR005845">
    <property type="entry name" value="A-D-PHexomutase_a/b/a-II"/>
</dbReference>
<dbReference type="InterPro" id="IPR005846">
    <property type="entry name" value="A-D-PHexomutase_a/b/a-III"/>
</dbReference>
<dbReference type="InterPro" id="IPR005843">
    <property type="entry name" value="A-D-PHexomutase_C"/>
</dbReference>
<dbReference type="InterPro" id="IPR036900">
    <property type="entry name" value="A-D-PHexomutase_C_sf"/>
</dbReference>
<dbReference type="InterPro" id="IPR016066">
    <property type="entry name" value="A-D-PHexomutase_CS"/>
</dbReference>
<dbReference type="InterPro" id="IPR005841">
    <property type="entry name" value="Alpha-D-phosphohexomutase_SF"/>
</dbReference>
<dbReference type="PANTHER" id="PTHR45745:SF1">
    <property type="entry name" value="PHOSPHOGLUCOMUTASE 2B-RELATED"/>
    <property type="match status" value="1"/>
</dbReference>
<dbReference type="PANTHER" id="PTHR45745">
    <property type="entry name" value="PHOSPHOMANNOMUTASE 45A"/>
    <property type="match status" value="1"/>
</dbReference>
<dbReference type="Pfam" id="PF02878">
    <property type="entry name" value="PGM_PMM_I"/>
    <property type="match status" value="1"/>
</dbReference>
<dbReference type="Pfam" id="PF02879">
    <property type="entry name" value="PGM_PMM_II"/>
    <property type="match status" value="1"/>
</dbReference>
<dbReference type="Pfam" id="PF02880">
    <property type="entry name" value="PGM_PMM_III"/>
    <property type="match status" value="1"/>
</dbReference>
<dbReference type="Pfam" id="PF00408">
    <property type="entry name" value="PGM_PMM_IV"/>
    <property type="match status" value="1"/>
</dbReference>
<dbReference type="PRINTS" id="PR00509">
    <property type="entry name" value="PGMPMM"/>
</dbReference>
<dbReference type="SUPFAM" id="SSF55957">
    <property type="entry name" value="Phosphoglucomutase, C-terminal domain"/>
    <property type="match status" value="1"/>
</dbReference>
<dbReference type="SUPFAM" id="SSF53738">
    <property type="entry name" value="Phosphoglucomutase, first 3 domains"/>
    <property type="match status" value="3"/>
</dbReference>
<dbReference type="PROSITE" id="PS00710">
    <property type="entry name" value="PGM_PMM"/>
    <property type="match status" value="1"/>
</dbReference>
<evidence type="ECO:0000250" key="1"/>
<evidence type="ECO:0000305" key="2"/>
<gene>
    <name type="primary">pgcA</name>
    <name type="ordered locus">MW2411</name>
</gene>
<accession>Q8NUV4</accession>
<sequence length="552" mass="62428">MKGCLATMDKELWIERANDSLVKHFYEQQSDIEQREGFESKLTFGTAGIRGKFGLGEGRLNKFTIEKLALGLARYLNAQTNSPTIVIHYDIRHLSTEFAQIIANVLANHQITVYLPDTYKTTPELSFAVRNLNTTAGIMITASHNPKDYNGIKVYGSDGAQLSTDASELASRYIEEVGDPLQIDIPISKQNTSYIKPFPKSVTDDYMKHIQNMIGYIPKSDLQVVFTSLHGTSVPIVPELLQSLNFNQFNLVEAQCKPDPNFSSVQSANPEDHRAFDQAVELANKSHADLLISTDPDADRLGIAERDAHGHITYFNGNQIGALLLNYRIQQTSQLRHRLMIQSIVSSELTKSLARYNNVEYKEVLTGFKFIAQEIRQLDDHQNMIFAFEESYGFLSEPFVRDKDAVQIVPLIIKYASELKLYGKTLKDELEQIYQTVGRHEDTLFSHTLDGLEGKKKIESIMTHFRSNPPQEIQGLKVKAIEDYLTSEVYHLDKDTTSQINSPKSNVIRVLFDEGFIALRPSGTEPKIKLYVSLKCRNFDDVAQKINAMIFS</sequence>
<keyword id="KW-0119">Carbohydrate metabolism</keyword>
<keyword id="KW-0313">Glucose metabolism</keyword>
<keyword id="KW-0413">Isomerase</keyword>
<keyword id="KW-0460">Magnesium</keyword>
<keyword id="KW-0479">Metal-binding</keyword>
<keyword id="KW-0597">Phosphoprotein</keyword>
<protein>
    <recommendedName>
        <fullName>Phosphoglucomutase</fullName>
        <shortName>PGM</shortName>
        <ecNumber>5.4.2.2</ecNumber>
    </recommendedName>
    <alternativeName>
        <fullName>Alpha-phosphoglucomutase</fullName>
    </alternativeName>
    <alternativeName>
        <fullName>Glucose phosphomutase</fullName>
    </alternativeName>
</protein>
<feature type="chain" id="PRO_0000308344" description="Phosphoglucomutase">
    <location>
        <begin position="1"/>
        <end position="552"/>
    </location>
</feature>
<feature type="active site" description="Phosphoserine intermediate" evidence="1">
    <location>
        <position position="143"/>
    </location>
</feature>
<feature type="binding site" description="via phosphate group" evidence="1">
    <location>
        <position position="143"/>
    </location>
    <ligand>
        <name>Mg(2+)</name>
        <dbReference type="ChEBI" id="CHEBI:18420"/>
    </ligand>
</feature>
<feature type="binding site" evidence="1">
    <location>
        <position position="295"/>
    </location>
    <ligand>
        <name>Mg(2+)</name>
        <dbReference type="ChEBI" id="CHEBI:18420"/>
    </ligand>
</feature>
<feature type="binding site" evidence="1">
    <location>
        <position position="297"/>
    </location>
    <ligand>
        <name>Mg(2+)</name>
        <dbReference type="ChEBI" id="CHEBI:18420"/>
    </ligand>
</feature>
<feature type="binding site" evidence="1">
    <location>
        <position position="299"/>
    </location>
    <ligand>
        <name>Mg(2+)</name>
        <dbReference type="ChEBI" id="CHEBI:18420"/>
    </ligand>
</feature>
<reference key="1">
    <citation type="journal article" date="2002" name="Lancet">
        <title>Genome and virulence determinants of high virulence community-acquired MRSA.</title>
        <authorList>
            <person name="Baba T."/>
            <person name="Takeuchi F."/>
            <person name="Kuroda M."/>
            <person name="Yuzawa H."/>
            <person name="Aoki K."/>
            <person name="Oguchi A."/>
            <person name="Nagai Y."/>
            <person name="Iwama N."/>
            <person name="Asano K."/>
            <person name="Naimi T."/>
            <person name="Kuroda H."/>
            <person name="Cui L."/>
            <person name="Yamamoto K."/>
            <person name="Hiramatsu K."/>
        </authorList>
    </citation>
    <scope>NUCLEOTIDE SEQUENCE [LARGE SCALE GENOMIC DNA]</scope>
    <source>
        <strain>MW2</strain>
    </source>
</reference>
<organism>
    <name type="scientific">Staphylococcus aureus (strain MW2)</name>
    <dbReference type="NCBI Taxonomy" id="196620"/>
    <lineage>
        <taxon>Bacteria</taxon>
        <taxon>Bacillati</taxon>
        <taxon>Bacillota</taxon>
        <taxon>Bacilli</taxon>
        <taxon>Bacillales</taxon>
        <taxon>Staphylococcaceae</taxon>
        <taxon>Staphylococcus</taxon>
    </lineage>
</organism>
<proteinExistence type="inferred from homology"/>
<comment type="function">
    <text evidence="1">Catalyzes the interconversion between glucose-6-phosphate and alpha-glucose-1-phosphate. This is the first step in the biosynthesis of diglucosyl-diacylglycerol (Glc2-DAG), i.e. the predominant glycolipid found in the S.aureus membrane, which is also used as a membrane anchor for lipoteichoic acid (LTA) (By similarity).</text>
</comment>
<comment type="catalytic activity">
    <reaction>
        <text>alpha-D-glucose 1-phosphate = alpha-D-glucose 6-phosphate</text>
        <dbReference type="Rhea" id="RHEA:23536"/>
        <dbReference type="ChEBI" id="CHEBI:58225"/>
        <dbReference type="ChEBI" id="CHEBI:58601"/>
        <dbReference type="EC" id="5.4.2.2"/>
    </reaction>
</comment>
<comment type="cofactor">
    <cofactor evidence="1">
        <name>Mg(2+)</name>
        <dbReference type="ChEBI" id="CHEBI:18420"/>
    </cofactor>
    <text evidence="1">Binds 1 Mg(2+) ion per subunit.</text>
</comment>
<comment type="pathway">
    <text>Glycolipid metabolism; diglucosyl-diacylglycerol biosynthesis.</text>
</comment>
<comment type="similarity">
    <text evidence="2">Belongs to the phosphohexose mutase family.</text>
</comment>
<comment type="sequence caution" evidence="2">
    <conflict type="erroneous initiation">
        <sequence resource="EMBL-CDS" id="BAB96276"/>
    </conflict>
</comment>
<name>PGCA_STAAW</name>